<evidence type="ECO:0000255" key="1"/>
<evidence type="ECO:0000256" key="2">
    <source>
        <dbReference type="SAM" id="MobiDB-lite"/>
    </source>
</evidence>
<evidence type="ECO:0000303" key="3">
    <source>
    </source>
</evidence>
<evidence type="ECO:0000305" key="4"/>
<organism>
    <name type="scientific">Homo sapiens</name>
    <name type="common">Human</name>
    <dbReference type="NCBI Taxonomy" id="9606"/>
    <lineage>
        <taxon>Eukaryota</taxon>
        <taxon>Metazoa</taxon>
        <taxon>Chordata</taxon>
        <taxon>Craniata</taxon>
        <taxon>Vertebrata</taxon>
        <taxon>Euteleostomi</taxon>
        <taxon>Mammalia</taxon>
        <taxon>Eutheria</taxon>
        <taxon>Euarchontoglires</taxon>
        <taxon>Primates</taxon>
        <taxon>Haplorrhini</taxon>
        <taxon>Catarrhini</taxon>
        <taxon>Hominidae</taxon>
        <taxon>Homo</taxon>
    </lineage>
</organism>
<name>CCSE1_HUMAN</name>
<comment type="interaction">
    <interactant intactId="EBI-1104948">
        <id>Q9C0I3</id>
    </interactant>
    <interactant intactId="EBI-928842">
        <id>Q9GZM8</id>
        <label>NDEL1</label>
    </interactant>
    <organismsDiffer>false</organismsDiffer>
    <experiments>5</experiments>
</comment>
<comment type="interaction">
    <interactant intactId="EBI-17793327">
        <id>Q9C0I3-2</id>
    </interactant>
    <interactant intactId="EBI-7116203">
        <id>O75031</id>
        <label>HSF2BP</label>
    </interactant>
    <organismsDiffer>false</organismsDiffer>
    <experiments>3</experiments>
</comment>
<comment type="interaction">
    <interactant intactId="EBI-17793327">
        <id>Q9C0I3-2</id>
    </interactant>
    <interactant intactId="EBI-11742507">
        <id>Q8TAP4-4</id>
        <label>LMO3</label>
    </interactant>
    <organismsDiffer>false</organismsDiffer>
    <experiments>3</experiments>
</comment>
<comment type="interaction">
    <interactant intactId="EBI-17793327">
        <id>Q9C0I3-2</id>
    </interactant>
    <interactant intactId="EBI-1004115">
        <id>Q15691</id>
        <label>MAPRE1</label>
    </interactant>
    <organismsDiffer>false</organismsDiffer>
    <experiments>3</experiments>
</comment>
<comment type="interaction">
    <interactant intactId="EBI-17793327">
        <id>Q9C0I3-2</id>
    </interactant>
    <interactant intactId="EBI-726739">
        <id>Q9UPY8</id>
        <label>MAPRE3</label>
    </interactant>
    <organismsDiffer>false</organismsDiffer>
    <experiments>3</experiments>
</comment>
<comment type="alternative products">
    <event type="alternative splicing"/>
    <isoform>
        <id>Q9C0I3-1</id>
        <name>1</name>
        <sequence type="displayed"/>
    </isoform>
    <isoform>
        <id>Q9C0I3-2</id>
        <name>2</name>
        <sequence type="described" ref="VSP_035318 VSP_035319"/>
    </isoform>
</comment>
<comment type="similarity">
    <text evidence="4">Belongs to the CCSER family.</text>
</comment>
<comment type="sequence caution" evidence="4">
    <conflict type="erroneous initiation">
        <sequence resource="EMBL-CDS" id="BAB21771"/>
    </conflict>
</comment>
<feature type="chain" id="PRO_0000349292" description="Serine-rich coiled-coil domain-containing protein 1">
    <location>
        <begin position="1"/>
        <end position="900"/>
    </location>
</feature>
<feature type="region of interest" description="Disordered" evidence="2">
    <location>
        <begin position="1"/>
        <end position="100"/>
    </location>
</feature>
<feature type="region of interest" description="Disordered" evidence="2">
    <location>
        <begin position="156"/>
        <end position="178"/>
    </location>
</feature>
<feature type="coiled-coil region" evidence="1">
    <location>
        <begin position="673"/>
        <end position="707"/>
    </location>
</feature>
<feature type="compositionally biased region" description="Low complexity" evidence="2">
    <location>
        <begin position="29"/>
        <end position="56"/>
    </location>
</feature>
<feature type="compositionally biased region" description="Polar residues" evidence="2">
    <location>
        <begin position="81"/>
        <end position="100"/>
    </location>
</feature>
<feature type="splice variant" id="VSP_035318" description="In isoform 2." evidence="3">
    <original>DIMKDEC</original>
    <variation>TTYPREF</variation>
    <location>
        <begin position="671"/>
        <end position="677"/>
    </location>
</feature>
<feature type="splice variant" id="VSP_035319" description="In isoform 2." evidence="3">
    <location>
        <begin position="678"/>
        <end position="900"/>
    </location>
</feature>
<feature type="sequence variant" id="VAR_059336" description="In dbSNP:rs12647859.">
    <original>G</original>
    <variation>S</variation>
    <location>
        <position position="382"/>
    </location>
</feature>
<accession>Q9C0I3</accession>
<accession>Q4W5M0</accession>
<accession>Q86V57</accession>
<sequence length="900" mass="99510">MGDSGSRRSTLVSRLPIFRRSINRRHDSLPSSPSSSNTVGVHSSSPSSTNSSSGSTGKRRSIFRTPSISFHHKKGSEPKQEPTNQNLSISNGAQPGHSNMQKLSLEEHIKTRGRHSVGFSSSRNKKITRSLTEDFEREKEHSTNKNVFINCLSSGKSEGDDSGFTEDQTRRSVKQSTRKLLPKSFSSHYKFSKPVLQSQSISLVQQSEFSLEVTQYQEREPVLVRASPSCSVDVTERAGSSLQSPLLSADLTTAQTPSEFLALTEDSVSEMDAFSKSGSMASHCDNFGHNDSTSQMSLNSAAVTKTTTELTGTVPCAIMSPGKYRLEGQCSTESNSLPETSAANQKEVLLQIAELPATSVSHSESNLPADSEREENIGLQNGETMLGTNSPRKLGFYEQHKAIAEHVKGIHPISDSKIIPTSGDHHIFNKTSHGYEANPAKVLASSLSPFREGRFIERRLRSSSEGTAGSSRMILKPKDGNIEEVNSLRKQRAGSSSSKMNSLDVLNNLGSCELDEDDLMLDLEFLEEQSLHPSVCREDSYHSVVSCAAVVLTPMEPMIEMKKREEPEFPEPSKQNLSLKLTKDVDQEARCSHISRMPNSPSADWPLQGVEENGGIDSLPFRLMLQDCTAVKTLLLKMKRVLQESADMSPASSTTSLPVSPLTEEPVPFKDIMKDECSMLKLQLKEKDELISQLQEELGKVRHLQKAFASRVDKSTQTELLCYDGLNLKRLETVQGGREATYRNRIVSQNLSTRDRKAIHTPTEDRFRYSAADQTSPYKNKTCQLPSLCLSNFLKDKELAEVIKHSRGTYETLTSDVTQNLRATVGQSSLKPTAKTEGLSTFLEKPKDQVATARQHSTFTGRFGQPPRGPISLHMYSRKNVFLHHNLHSTELQTLGQQDG</sequence>
<reference key="1">
    <citation type="journal article" date="2000" name="DNA Res.">
        <title>Prediction of the coding sequences of unidentified human genes. XIX. The complete sequences of 100 new cDNA clones from brain which code for large proteins in vitro.</title>
        <authorList>
            <person name="Nagase T."/>
            <person name="Kikuno R."/>
            <person name="Hattori A."/>
            <person name="Kondo Y."/>
            <person name="Okumura K."/>
            <person name="Ohara O."/>
        </authorList>
    </citation>
    <scope>NUCLEOTIDE SEQUENCE [LARGE SCALE MRNA] (ISOFORM 1)</scope>
    <source>
        <tissue>Brain</tissue>
    </source>
</reference>
<reference key="2">
    <citation type="journal article" date="2005" name="Nature">
        <title>Generation and annotation of the DNA sequences of human chromosomes 2 and 4.</title>
        <authorList>
            <person name="Hillier L.W."/>
            <person name="Graves T.A."/>
            <person name="Fulton R.S."/>
            <person name="Fulton L.A."/>
            <person name="Pepin K.H."/>
            <person name="Minx P."/>
            <person name="Wagner-McPherson C."/>
            <person name="Layman D."/>
            <person name="Wylie K."/>
            <person name="Sekhon M."/>
            <person name="Becker M.C."/>
            <person name="Fewell G.A."/>
            <person name="Delehaunty K.D."/>
            <person name="Miner T.L."/>
            <person name="Nash W.E."/>
            <person name="Kremitzki C."/>
            <person name="Oddy L."/>
            <person name="Du H."/>
            <person name="Sun H."/>
            <person name="Bradshaw-Cordum H."/>
            <person name="Ali J."/>
            <person name="Carter J."/>
            <person name="Cordes M."/>
            <person name="Harris A."/>
            <person name="Isak A."/>
            <person name="van Brunt A."/>
            <person name="Nguyen C."/>
            <person name="Du F."/>
            <person name="Courtney L."/>
            <person name="Kalicki J."/>
            <person name="Ozersky P."/>
            <person name="Abbott S."/>
            <person name="Armstrong J."/>
            <person name="Belter E.A."/>
            <person name="Caruso L."/>
            <person name="Cedroni M."/>
            <person name="Cotton M."/>
            <person name="Davidson T."/>
            <person name="Desai A."/>
            <person name="Elliott G."/>
            <person name="Erb T."/>
            <person name="Fronick C."/>
            <person name="Gaige T."/>
            <person name="Haakenson W."/>
            <person name="Haglund K."/>
            <person name="Holmes A."/>
            <person name="Harkins R."/>
            <person name="Kim K."/>
            <person name="Kruchowski S.S."/>
            <person name="Strong C.M."/>
            <person name="Grewal N."/>
            <person name="Goyea E."/>
            <person name="Hou S."/>
            <person name="Levy A."/>
            <person name="Martinka S."/>
            <person name="Mead K."/>
            <person name="McLellan M.D."/>
            <person name="Meyer R."/>
            <person name="Randall-Maher J."/>
            <person name="Tomlinson C."/>
            <person name="Dauphin-Kohlberg S."/>
            <person name="Kozlowicz-Reilly A."/>
            <person name="Shah N."/>
            <person name="Swearengen-Shahid S."/>
            <person name="Snider J."/>
            <person name="Strong J.T."/>
            <person name="Thompson J."/>
            <person name="Yoakum M."/>
            <person name="Leonard S."/>
            <person name="Pearman C."/>
            <person name="Trani L."/>
            <person name="Radionenko M."/>
            <person name="Waligorski J.E."/>
            <person name="Wang C."/>
            <person name="Rock S.M."/>
            <person name="Tin-Wollam A.-M."/>
            <person name="Maupin R."/>
            <person name="Latreille P."/>
            <person name="Wendl M.C."/>
            <person name="Yang S.-P."/>
            <person name="Pohl C."/>
            <person name="Wallis J.W."/>
            <person name="Spieth J."/>
            <person name="Bieri T.A."/>
            <person name="Berkowicz N."/>
            <person name="Nelson J.O."/>
            <person name="Osborne J."/>
            <person name="Ding L."/>
            <person name="Meyer R."/>
            <person name="Sabo A."/>
            <person name="Shotland Y."/>
            <person name="Sinha P."/>
            <person name="Wohldmann P.E."/>
            <person name="Cook L.L."/>
            <person name="Hickenbotham M.T."/>
            <person name="Eldred J."/>
            <person name="Williams D."/>
            <person name="Jones T.A."/>
            <person name="She X."/>
            <person name="Ciccarelli F.D."/>
            <person name="Izaurralde E."/>
            <person name="Taylor J."/>
            <person name="Schmutz J."/>
            <person name="Myers R.M."/>
            <person name="Cox D.R."/>
            <person name="Huang X."/>
            <person name="McPherson J.D."/>
            <person name="Mardis E.R."/>
            <person name="Clifton S.W."/>
            <person name="Warren W.C."/>
            <person name="Chinwalla A.T."/>
            <person name="Eddy S.R."/>
            <person name="Marra M.A."/>
            <person name="Ovcharenko I."/>
            <person name="Furey T.S."/>
            <person name="Miller W."/>
            <person name="Eichler E.E."/>
            <person name="Bork P."/>
            <person name="Suyama M."/>
            <person name="Torrents D."/>
            <person name="Waterston R.H."/>
            <person name="Wilson R.K."/>
        </authorList>
    </citation>
    <scope>NUCLEOTIDE SEQUENCE [LARGE SCALE GENOMIC DNA]</scope>
</reference>
<reference key="3">
    <citation type="journal article" date="2004" name="Genome Res.">
        <title>The status, quality, and expansion of the NIH full-length cDNA project: the Mammalian Gene Collection (MGC).</title>
        <authorList>
            <consortium name="The MGC Project Team"/>
        </authorList>
    </citation>
    <scope>NUCLEOTIDE SEQUENCE [LARGE SCALE MRNA] (ISOFORM 2)</scope>
    <source>
        <tissue>Testis</tissue>
    </source>
</reference>
<proteinExistence type="evidence at protein level"/>
<dbReference type="EMBL" id="AB051467">
    <property type="protein sequence ID" value="BAB21771.1"/>
    <property type="status" value="ALT_INIT"/>
    <property type="molecule type" value="mRNA"/>
</dbReference>
<dbReference type="EMBL" id="AC093729">
    <property type="protein sequence ID" value="AAY41009.1"/>
    <property type="molecule type" value="Genomic_DNA"/>
</dbReference>
<dbReference type="EMBL" id="AC004054">
    <property type="status" value="NOT_ANNOTATED_CDS"/>
    <property type="molecule type" value="Genomic_DNA"/>
</dbReference>
<dbReference type="EMBL" id="AC019188">
    <property type="status" value="NOT_ANNOTATED_CDS"/>
    <property type="molecule type" value="Genomic_DNA"/>
</dbReference>
<dbReference type="EMBL" id="AC074124">
    <property type="status" value="NOT_ANNOTATED_CDS"/>
    <property type="molecule type" value="Genomic_DNA"/>
</dbReference>
<dbReference type="EMBL" id="AC079301">
    <property type="status" value="NOT_ANNOTATED_CDS"/>
    <property type="molecule type" value="Genomic_DNA"/>
</dbReference>
<dbReference type="EMBL" id="AC093781">
    <property type="status" value="NOT_ANNOTATED_CDS"/>
    <property type="molecule type" value="Genomic_DNA"/>
</dbReference>
<dbReference type="EMBL" id="AC093793">
    <property type="status" value="NOT_ANNOTATED_CDS"/>
    <property type="molecule type" value="Genomic_DNA"/>
</dbReference>
<dbReference type="EMBL" id="AC096897">
    <property type="status" value="NOT_ANNOTATED_CDS"/>
    <property type="molecule type" value="Genomic_DNA"/>
</dbReference>
<dbReference type="EMBL" id="AC097524">
    <property type="status" value="NOT_ANNOTATED_CDS"/>
    <property type="molecule type" value="Genomic_DNA"/>
</dbReference>
<dbReference type="EMBL" id="AC098593">
    <property type="status" value="NOT_ANNOTATED_CDS"/>
    <property type="molecule type" value="Genomic_DNA"/>
</dbReference>
<dbReference type="EMBL" id="AC107049">
    <property type="status" value="NOT_ANNOTATED_CDS"/>
    <property type="molecule type" value="Genomic_DNA"/>
</dbReference>
<dbReference type="EMBL" id="AC110774">
    <property type="status" value="NOT_ANNOTATED_CDS"/>
    <property type="molecule type" value="Genomic_DNA"/>
</dbReference>
<dbReference type="EMBL" id="AC110796">
    <property type="status" value="NOT_ANNOTATED_CDS"/>
    <property type="molecule type" value="Genomic_DNA"/>
</dbReference>
<dbReference type="EMBL" id="AC114787">
    <property type="status" value="NOT_ANNOTATED_CDS"/>
    <property type="molecule type" value="Genomic_DNA"/>
</dbReference>
<dbReference type="EMBL" id="BC051694">
    <property type="protein sequence ID" value="AAH51694.1"/>
    <property type="molecule type" value="mRNA"/>
</dbReference>
<dbReference type="CCDS" id="CCDS47099.1">
    <molecule id="Q9C0I3-1"/>
</dbReference>
<dbReference type="CCDS" id="CCDS47100.1">
    <molecule id="Q9C0I3-2"/>
</dbReference>
<dbReference type="RefSeq" id="NP_001138537.1">
    <molecule id="Q9C0I3-1"/>
    <property type="nucleotide sequence ID" value="NM_001145065.2"/>
</dbReference>
<dbReference type="RefSeq" id="NP_997374.1">
    <molecule id="Q9C0I3-2"/>
    <property type="nucleotide sequence ID" value="NM_207491.2"/>
</dbReference>
<dbReference type="RefSeq" id="XP_047271634.1">
    <molecule id="Q9C0I3-1"/>
    <property type="nucleotide sequence ID" value="XM_047415678.1"/>
</dbReference>
<dbReference type="RefSeq" id="XP_047271639.1">
    <molecule id="Q9C0I3-2"/>
    <property type="nucleotide sequence ID" value="XM_047415683.1"/>
</dbReference>
<dbReference type="SMR" id="Q9C0I3"/>
<dbReference type="BioGRID" id="134948">
    <property type="interactions" value="24"/>
</dbReference>
<dbReference type="ELM" id="Q9C0I3"/>
<dbReference type="FunCoup" id="Q9C0I3">
    <property type="interactions" value="231"/>
</dbReference>
<dbReference type="IntAct" id="Q9C0I3">
    <property type="interactions" value="17"/>
</dbReference>
<dbReference type="STRING" id="9606.ENSP00000425040"/>
<dbReference type="GlyGen" id="Q9C0I3">
    <property type="glycosylation" value="2 sites, 1 N-linked glycan (1 site), 1 O-linked glycan (1 site)"/>
</dbReference>
<dbReference type="iPTMnet" id="Q9C0I3"/>
<dbReference type="PhosphoSitePlus" id="Q9C0I3"/>
<dbReference type="BioMuta" id="CCSER1"/>
<dbReference type="DMDM" id="205815669"/>
<dbReference type="jPOST" id="Q9C0I3"/>
<dbReference type="MassIVE" id="Q9C0I3"/>
<dbReference type="PaxDb" id="9606-ENSP00000425040"/>
<dbReference type="PeptideAtlas" id="Q9C0I3"/>
<dbReference type="ProteomicsDB" id="80053">
    <molecule id="Q9C0I3-1"/>
</dbReference>
<dbReference type="ProteomicsDB" id="80054">
    <molecule id="Q9C0I3-2"/>
</dbReference>
<dbReference type="Antibodypedia" id="44922">
    <property type="antibodies" value="77 antibodies from 16 providers"/>
</dbReference>
<dbReference type="DNASU" id="401145"/>
<dbReference type="Ensembl" id="ENST00000432775.6">
    <molecule id="Q9C0I3-2"/>
    <property type="protein sequence ID" value="ENSP00000389283.2"/>
    <property type="gene ID" value="ENSG00000184305.16"/>
</dbReference>
<dbReference type="Ensembl" id="ENST00000509176.6">
    <molecule id="Q9C0I3-1"/>
    <property type="protein sequence ID" value="ENSP00000425040.1"/>
    <property type="gene ID" value="ENSG00000184305.16"/>
</dbReference>
<dbReference type="GeneID" id="401145"/>
<dbReference type="KEGG" id="hsa:401145"/>
<dbReference type="MANE-Select" id="ENST00000509176.6">
    <property type="protein sequence ID" value="ENSP00000425040.1"/>
    <property type="RefSeq nucleotide sequence ID" value="NM_001145065.2"/>
    <property type="RefSeq protein sequence ID" value="NP_001138537.1"/>
</dbReference>
<dbReference type="UCSC" id="uc003hsv.5">
    <molecule id="Q9C0I3-1"/>
    <property type="organism name" value="human"/>
</dbReference>
<dbReference type="AGR" id="HGNC:29349"/>
<dbReference type="CTD" id="401145"/>
<dbReference type="DisGeNET" id="401145"/>
<dbReference type="GeneCards" id="CCSER1"/>
<dbReference type="HGNC" id="HGNC:29349">
    <property type="gene designation" value="CCSER1"/>
</dbReference>
<dbReference type="HPA" id="ENSG00000184305">
    <property type="expression patterns" value="Tissue enhanced (retina, testis)"/>
</dbReference>
<dbReference type="MIM" id="618934">
    <property type="type" value="gene"/>
</dbReference>
<dbReference type="neXtProt" id="NX_Q9C0I3"/>
<dbReference type="OpenTargets" id="ENSG00000184305"/>
<dbReference type="PharmGKB" id="PA165663936"/>
<dbReference type="VEuPathDB" id="HostDB:ENSG00000184305"/>
<dbReference type="eggNOG" id="ENOG502QXW4">
    <property type="taxonomic scope" value="Eukaryota"/>
</dbReference>
<dbReference type="GeneTree" id="ENSGT00940000153912"/>
<dbReference type="HOGENOM" id="CLU_011774_0_0_1"/>
<dbReference type="InParanoid" id="Q9C0I3"/>
<dbReference type="OMA" id="TDWPLQG"/>
<dbReference type="OrthoDB" id="10046062at2759"/>
<dbReference type="PAN-GO" id="Q9C0I3">
    <property type="GO annotations" value="0 GO annotations based on evolutionary models"/>
</dbReference>
<dbReference type="PhylomeDB" id="Q9C0I3"/>
<dbReference type="TreeFam" id="TF331021"/>
<dbReference type="PathwayCommons" id="Q9C0I3"/>
<dbReference type="SignaLink" id="Q9C0I3"/>
<dbReference type="BioGRID-ORCS" id="401145">
    <property type="hits" value="47 hits in 1134 CRISPR screens"/>
</dbReference>
<dbReference type="ChiTaRS" id="CCSER1">
    <property type="organism name" value="human"/>
</dbReference>
<dbReference type="GenomeRNAi" id="401145"/>
<dbReference type="Pharos" id="Q9C0I3">
    <property type="development level" value="Tbio"/>
</dbReference>
<dbReference type="PRO" id="PR:Q9C0I3"/>
<dbReference type="Proteomes" id="UP000005640">
    <property type="component" value="Chromosome 4"/>
</dbReference>
<dbReference type="RNAct" id="Q9C0I3">
    <property type="molecule type" value="protein"/>
</dbReference>
<dbReference type="Bgee" id="ENSG00000184305">
    <property type="expression patterns" value="Expressed in male germ line stem cell (sensu Vertebrata) in testis and 102 other cell types or tissues"/>
</dbReference>
<dbReference type="ExpressionAtlas" id="Q9C0I3">
    <property type="expression patterns" value="baseline and differential"/>
</dbReference>
<dbReference type="InterPro" id="IPR029627">
    <property type="entry name" value="CCSER"/>
</dbReference>
<dbReference type="PANTHER" id="PTHR22461:SF1">
    <property type="entry name" value="SERINE-RICH COILED-COIL DOMAIN-CONTAINING PROTEIN 1"/>
    <property type="match status" value="1"/>
</dbReference>
<dbReference type="PANTHER" id="PTHR22461">
    <property type="entry name" value="SERINE-RICH COILED-COIL DOMAIN-CONTAINING PROTEIN 2-RELATED"/>
    <property type="match status" value="1"/>
</dbReference>
<protein>
    <recommendedName>
        <fullName>Serine-rich coiled-coil domain-containing protein 1</fullName>
    </recommendedName>
    <alternativeName>
        <fullName>Coiled-coil serine-rich protein 1</fullName>
    </alternativeName>
</protein>
<keyword id="KW-0025">Alternative splicing</keyword>
<keyword id="KW-0175">Coiled coil</keyword>
<keyword id="KW-1267">Proteomics identification</keyword>
<keyword id="KW-1185">Reference proteome</keyword>
<gene>
    <name type="primary">CCSER1</name>
    <name type="synonym">FAM190A</name>
    <name type="synonym">KIAA1680</name>
</gene>